<keyword id="KW-0012">Acyltransferase</keyword>
<keyword id="KW-0997">Cell inner membrane</keyword>
<keyword id="KW-1003">Cell membrane</keyword>
<keyword id="KW-0472">Membrane</keyword>
<keyword id="KW-1185">Reference proteome</keyword>
<keyword id="KW-0808">Transferase</keyword>
<keyword id="KW-0812">Transmembrane</keyword>
<keyword id="KW-1133">Transmembrane helix</keyword>
<comment type="function">
    <text evidence="1">Catalyzes the phospholipid dependent N-acylation of the N-terminal cysteine of apolipoprotein, the last step in lipoprotein maturation.</text>
</comment>
<comment type="catalytic activity">
    <reaction evidence="1">
        <text>N-terminal S-1,2-diacyl-sn-glyceryl-L-cysteinyl-[lipoprotein] + a glycerophospholipid = N-acyl-S-1,2-diacyl-sn-glyceryl-L-cysteinyl-[lipoprotein] + a 2-acyl-sn-glycero-3-phospholipid + H(+)</text>
        <dbReference type="Rhea" id="RHEA:48228"/>
        <dbReference type="Rhea" id="RHEA-COMP:14681"/>
        <dbReference type="Rhea" id="RHEA-COMP:14684"/>
        <dbReference type="ChEBI" id="CHEBI:15378"/>
        <dbReference type="ChEBI" id="CHEBI:136912"/>
        <dbReference type="ChEBI" id="CHEBI:140656"/>
        <dbReference type="ChEBI" id="CHEBI:140657"/>
        <dbReference type="ChEBI" id="CHEBI:140660"/>
        <dbReference type="EC" id="2.3.1.269"/>
    </reaction>
</comment>
<comment type="pathway">
    <text evidence="1">Protein modification; lipoprotein biosynthesis (N-acyl transfer).</text>
</comment>
<comment type="subcellular location">
    <subcellularLocation>
        <location evidence="1">Cell inner membrane</location>
        <topology evidence="1">Multi-pass membrane protein</topology>
    </subcellularLocation>
</comment>
<comment type="similarity">
    <text evidence="1">Belongs to the CN hydrolase family. Apolipoprotein N-acyltransferase subfamily.</text>
</comment>
<comment type="sequence caution" evidence="2">
    <conflict type="erroneous initiation">
        <sequence resource="EMBL-CDS" id="AAN48323"/>
    </conflict>
    <text>Truncated N-terminus.</text>
</comment>
<evidence type="ECO:0000255" key="1">
    <source>
        <dbReference type="HAMAP-Rule" id="MF_01148"/>
    </source>
</evidence>
<evidence type="ECO:0000305" key="2"/>
<organism>
    <name type="scientific">Leptospira interrogans serogroup Icterohaemorrhagiae serovar Lai (strain 56601)</name>
    <dbReference type="NCBI Taxonomy" id="189518"/>
    <lineage>
        <taxon>Bacteria</taxon>
        <taxon>Pseudomonadati</taxon>
        <taxon>Spirochaetota</taxon>
        <taxon>Spirochaetia</taxon>
        <taxon>Leptospirales</taxon>
        <taxon>Leptospiraceae</taxon>
        <taxon>Leptospira</taxon>
    </lineage>
</organism>
<protein>
    <recommendedName>
        <fullName evidence="1">Apolipoprotein N-acyltransferase 1</fullName>
        <shortName evidence="1">ALP N-acyltransferase 1</shortName>
        <ecNumber evidence="1">2.3.1.269</ecNumber>
    </recommendedName>
</protein>
<feature type="chain" id="PRO_0000178074" description="Apolipoprotein N-acyltransferase 1">
    <location>
        <begin position="1"/>
        <end position="576"/>
    </location>
</feature>
<feature type="transmembrane region" description="Helical" evidence="1">
    <location>
        <begin position="15"/>
        <end position="35"/>
    </location>
</feature>
<feature type="transmembrane region" description="Helical" evidence="1">
    <location>
        <begin position="38"/>
        <end position="58"/>
    </location>
</feature>
<feature type="transmembrane region" description="Helical" evidence="1">
    <location>
        <begin position="60"/>
        <end position="80"/>
    </location>
</feature>
<feature type="transmembrane region" description="Helical" evidence="1">
    <location>
        <begin position="92"/>
        <end position="112"/>
    </location>
</feature>
<feature type="transmembrane region" description="Helical" evidence="1">
    <location>
        <begin position="128"/>
        <end position="148"/>
    </location>
</feature>
<feature type="transmembrane region" description="Helical" evidence="1">
    <location>
        <begin position="168"/>
        <end position="188"/>
    </location>
</feature>
<feature type="transmembrane region" description="Helical" evidence="1">
    <location>
        <begin position="204"/>
        <end position="224"/>
    </location>
</feature>
<feature type="transmembrane region" description="Helical" evidence="1">
    <location>
        <begin position="549"/>
        <end position="569"/>
    </location>
</feature>
<feature type="domain" description="CN hydrolase" evidence="1">
    <location>
        <begin position="236"/>
        <end position="538"/>
    </location>
</feature>
<feature type="active site" description="Proton acceptor" evidence="1">
    <location>
        <position position="285"/>
    </location>
</feature>
<feature type="active site" evidence="1">
    <location>
        <position position="355"/>
    </location>
</feature>
<feature type="active site" description="Nucleophile" evidence="1">
    <location>
        <position position="446"/>
    </location>
</feature>
<accession>Q8F724</accession>
<gene>
    <name evidence="1" type="primary">lnt1</name>
    <name type="ordered locus">LA_1124</name>
</gene>
<proteinExistence type="inferred from homology"/>
<sequence length="576" mass="66158">MFYNFISKDSILYRLILCFGIGIGTVFGLSPFSFFSAGVFASISCIFLFFSLNRTSIWKAFLWLLILSQILNFTAFYWIPGAISRISGVNTFVSILFFFLYGLISHLKFFLFYTLFRFSKIDSASKTYILLIFPAAGTLSDMITFQIFPWYWGNLISGSIVFEQFASICGVYGLSFLLLFISSTFLILVNYYKYKNSKEFKTSIASLICITFIYGFGLYRIGYINQSQNELKPKNLSVLMIQPDTSPGTKDLKADASYLSATMSKVFSLAIPTFENSPSLIVIPESAIPFHGTIDSEENRKEKIYSSTMEGIILYLSKHTGADVLFNELNLDENKLRNQVSLFKNLDGKTERYNKRRLLPFGEYLPMEKNFPFLRSIFQETSRYVPGEFPKLLIGNKIQNQRSFLPPEISKLNEPKTYRYEFSSIVEHTNKIRNLEYSYSILPLLCYEAMFTELVLDYFQNEQKPEVLINITNDSWFDSELEAYQHSGAVRLRAIETGLPLIRSAVSGISEVWDARGIPMIVPIGFHETGTRAFSIRLDAIESTIYTRFGNSFLWIFCILILISRLIFVSRIERKS</sequence>
<reference key="1">
    <citation type="journal article" date="2003" name="Nature">
        <title>Unique physiological and pathogenic features of Leptospira interrogans revealed by whole-genome sequencing.</title>
        <authorList>
            <person name="Ren S.-X."/>
            <person name="Fu G."/>
            <person name="Jiang X.-G."/>
            <person name="Zeng R."/>
            <person name="Miao Y.-G."/>
            <person name="Xu H."/>
            <person name="Zhang Y.-X."/>
            <person name="Xiong H."/>
            <person name="Lu G."/>
            <person name="Lu L.-F."/>
            <person name="Jiang H.-Q."/>
            <person name="Jia J."/>
            <person name="Tu Y.-F."/>
            <person name="Jiang J.-X."/>
            <person name="Gu W.-Y."/>
            <person name="Zhang Y.-Q."/>
            <person name="Cai Z."/>
            <person name="Sheng H.-H."/>
            <person name="Yin H.-F."/>
            <person name="Zhang Y."/>
            <person name="Zhu G.-F."/>
            <person name="Wan M."/>
            <person name="Huang H.-L."/>
            <person name="Qian Z."/>
            <person name="Wang S.-Y."/>
            <person name="Ma W."/>
            <person name="Yao Z.-J."/>
            <person name="Shen Y."/>
            <person name="Qiang B.-Q."/>
            <person name="Xia Q.-C."/>
            <person name="Guo X.-K."/>
            <person name="Danchin A."/>
            <person name="Saint Girons I."/>
            <person name="Somerville R.L."/>
            <person name="Wen Y.-M."/>
            <person name="Shi M.-H."/>
            <person name="Chen Z."/>
            <person name="Xu J.-G."/>
            <person name="Zhao G.-P."/>
        </authorList>
    </citation>
    <scope>NUCLEOTIDE SEQUENCE [LARGE SCALE GENOMIC DNA]</scope>
    <source>
        <strain>56601</strain>
    </source>
</reference>
<dbReference type="EC" id="2.3.1.269" evidence="1"/>
<dbReference type="EMBL" id="AE010300">
    <property type="protein sequence ID" value="AAN48323.2"/>
    <property type="status" value="ALT_INIT"/>
    <property type="molecule type" value="Genomic_DNA"/>
</dbReference>
<dbReference type="RefSeq" id="NP_711305.2">
    <property type="nucleotide sequence ID" value="NC_004342.2"/>
</dbReference>
<dbReference type="RefSeq" id="WP_000499632.1">
    <property type="nucleotide sequence ID" value="NC_004342.2"/>
</dbReference>
<dbReference type="SMR" id="Q8F724"/>
<dbReference type="FunCoup" id="Q8F724">
    <property type="interactions" value="252"/>
</dbReference>
<dbReference type="STRING" id="189518.LA_1124"/>
<dbReference type="PaxDb" id="189518-LA_1124"/>
<dbReference type="EnsemblBacteria" id="AAN48323">
    <property type="protein sequence ID" value="AAN48323"/>
    <property type="gene ID" value="LA_1124"/>
</dbReference>
<dbReference type="KEGG" id="lil:LA_1124"/>
<dbReference type="PATRIC" id="fig|189518.3.peg.1116"/>
<dbReference type="HOGENOM" id="CLU_019563_3_1_12"/>
<dbReference type="InParanoid" id="Q8F724"/>
<dbReference type="OrthoDB" id="9804277at2"/>
<dbReference type="UniPathway" id="UPA00666"/>
<dbReference type="Proteomes" id="UP000001408">
    <property type="component" value="Chromosome I"/>
</dbReference>
<dbReference type="GO" id="GO:0005886">
    <property type="term" value="C:plasma membrane"/>
    <property type="evidence" value="ECO:0007669"/>
    <property type="project" value="UniProtKB-SubCell"/>
</dbReference>
<dbReference type="GO" id="GO:0016410">
    <property type="term" value="F:N-acyltransferase activity"/>
    <property type="evidence" value="ECO:0007669"/>
    <property type="project" value="UniProtKB-UniRule"/>
</dbReference>
<dbReference type="GO" id="GO:0042158">
    <property type="term" value="P:lipoprotein biosynthetic process"/>
    <property type="evidence" value="ECO:0007669"/>
    <property type="project" value="UniProtKB-UniRule"/>
</dbReference>
<dbReference type="CDD" id="cd07571">
    <property type="entry name" value="ALP_N-acyl_transferase"/>
    <property type="match status" value="1"/>
</dbReference>
<dbReference type="Gene3D" id="3.60.110.10">
    <property type="entry name" value="Carbon-nitrogen hydrolase"/>
    <property type="match status" value="1"/>
</dbReference>
<dbReference type="HAMAP" id="MF_01148">
    <property type="entry name" value="Lnt"/>
    <property type="match status" value="1"/>
</dbReference>
<dbReference type="InterPro" id="IPR004563">
    <property type="entry name" value="Apolipo_AcylTrfase"/>
</dbReference>
<dbReference type="InterPro" id="IPR003010">
    <property type="entry name" value="C-N_Hydrolase"/>
</dbReference>
<dbReference type="InterPro" id="IPR036526">
    <property type="entry name" value="C-N_Hydrolase_sf"/>
</dbReference>
<dbReference type="InterPro" id="IPR045378">
    <property type="entry name" value="LNT_N"/>
</dbReference>
<dbReference type="PANTHER" id="PTHR38686">
    <property type="entry name" value="APOLIPOPROTEIN N-ACYLTRANSFERASE"/>
    <property type="match status" value="1"/>
</dbReference>
<dbReference type="PANTHER" id="PTHR38686:SF1">
    <property type="entry name" value="APOLIPOPROTEIN N-ACYLTRANSFERASE"/>
    <property type="match status" value="1"/>
</dbReference>
<dbReference type="Pfam" id="PF00795">
    <property type="entry name" value="CN_hydrolase"/>
    <property type="match status" value="1"/>
</dbReference>
<dbReference type="Pfam" id="PF20154">
    <property type="entry name" value="LNT_N"/>
    <property type="match status" value="1"/>
</dbReference>
<dbReference type="SUPFAM" id="SSF56317">
    <property type="entry name" value="Carbon-nitrogen hydrolase"/>
    <property type="match status" value="1"/>
</dbReference>
<dbReference type="PROSITE" id="PS50263">
    <property type="entry name" value="CN_HYDROLASE"/>
    <property type="match status" value="1"/>
</dbReference>
<name>LNT1_LEPIN</name>